<organism>
    <name type="scientific">Escherichia coli O157:H7 (strain EC4115 / EHEC)</name>
    <dbReference type="NCBI Taxonomy" id="444450"/>
    <lineage>
        <taxon>Bacteria</taxon>
        <taxon>Pseudomonadati</taxon>
        <taxon>Pseudomonadota</taxon>
        <taxon>Gammaproteobacteria</taxon>
        <taxon>Enterobacterales</taxon>
        <taxon>Enterobacteriaceae</taxon>
        <taxon>Escherichia</taxon>
    </lineage>
</organism>
<comment type="function">
    <text evidence="1">Catalyzes a reversible aldol reaction between acetaldehyde and D-glyceraldehyde 3-phosphate to generate 2-deoxy-D-ribose 5-phosphate.</text>
</comment>
<comment type="catalytic activity">
    <reaction evidence="1">
        <text>2-deoxy-D-ribose 5-phosphate = D-glyceraldehyde 3-phosphate + acetaldehyde</text>
        <dbReference type="Rhea" id="RHEA:12821"/>
        <dbReference type="ChEBI" id="CHEBI:15343"/>
        <dbReference type="ChEBI" id="CHEBI:59776"/>
        <dbReference type="ChEBI" id="CHEBI:62877"/>
        <dbReference type="EC" id="4.1.2.4"/>
    </reaction>
</comment>
<comment type="pathway">
    <text evidence="1">Carbohydrate degradation; 2-deoxy-D-ribose 1-phosphate degradation; D-glyceraldehyde 3-phosphate and acetaldehyde from 2-deoxy-alpha-D-ribose 1-phosphate: step 2/2.</text>
</comment>
<comment type="subcellular location">
    <subcellularLocation>
        <location evidence="1">Cytoplasm</location>
    </subcellularLocation>
</comment>
<comment type="similarity">
    <text evidence="1">Belongs to the DeoC/FbaB aldolase family. DeoC type 2 subfamily.</text>
</comment>
<feature type="chain" id="PRO_1000129800" description="Deoxyribose-phosphate aldolase">
    <location>
        <begin position="1"/>
        <end position="259"/>
    </location>
</feature>
<feature type="active site" description="Proton donor/acceptor" evidence="1">
    <location>
        <position position="102"/>
    </location>
</feature>
<feature type="active site" description="Schiff-base intermediate with acetaldehyde" evidence="1">
    <location>
        <position position="167"/>
    </location>
</feature>
<feature type="active site" description="Proton donor/acceptor" evidence="1">
    <location>
        <position position="201"/>
    </location>
</feature>
<reference key="1">
    <citation type="journal article" date="2011" name="Proc. Natl. Acad. Sci. U.S.A.">
        <title>Genomic anatomy of Escherichia coli O157:H7 outbreaks.</title>
        <authorList>
            <person name="Eppinger M."/>
            <person name="Mammel M.K."/>
            <person name="Leclerc J.E."/>
            <person name="Ravel J."/>
            <person name="Cebula T.A."/>
        </authorList>
    </citation>
    <scope>NUCLEOTIDE SEQUENCE [LARGE SCALE GENOMIC DNA]</scope>
    <source>
        <strain>EC4115 / EHEC</strain>
    </source>
</reference>
<name>DEOC_ECO5E</name>
<keyword id="KW-0963">Cytoplasm</keyword>
<keyword id="KW-0456">Lyase</keyword>
<keyword id="KW-0704">Schiff base</keyword>
<sequence>MTDLKASSLRALKLMDLTTLNDDDTDEKVIALCHQAKTPVGNTAAICIYPRFIPIARKTLKEQGTPEIRIATVTNFPHGNDDIEIALAETRAAIAYGADEVDVVFPYRALMAGNEQVGFDLVKACKEACAAANVLLKVIIETGELKDEALIRKASEISIKAGADFIKTSTGKVAVNATPESARIMMEVIRDMGVEKTVGFKPAGGVRTAEDAQKYLAIADELFGADWADARHYRFGASSLLASLLKALGHGDGKSASSY</sequence>
<proteinExistence type="inferred from homology"/>
<evidence type="ECO:0000255" key="1">
    <source>
        <dbReference type="HAMAP-Rule" id="MF_00592"/>
    </source>
</evidence>
<protein>
    <recommendedName>
        <fullName evidence="1">Deoxyribose-phosphate aldolase</fullName>
        <shortName evidence="1">DERA</shortName>
        <ecNumber evidence="1">4.1.2.4</ecNumber>
    </recommendedName>
    <alternativeName>
        <fullName evidence="1">2-deoxy-D-ribose 5-phosphate aldolase</fullName>
    </alternativeName>
    <alternativeName>
        <fullName evidence="1">Phosphodeoxyriboaldolase</fullName>
        <shortName evidence="1">Deoxyriboaldolase</shortName>
    </alternativeName>
</protein>
<dbReference type="EC" id="4.1.2.4" evidence="1"/>
<dbReference type="EMBL" id="CP001164">
    <property type="protein sequence ID" value="ACI39070.1"/>
    <property type="molecule type" value="Genomic_DNA"/>
</dbReference>
<dbReference type="RefSeq" id="WP_001295412.1">
    <property type="nucleotide sequence ID" value="NC_011353.1"/>
</dbReference>
<dbReference type="SMR" id="B5Z4R3"/>
<dbReference type="GeneID" id="93777463"/>
<dbReference type="KEGG" id="ecf:ECH74115_5896"/>
<dbReference type="HOGENOM" id="CLU_053595_3_1_6"/>
<dbReference type="UniPathway" id="UPA00002">
    <property type="reaction ID" value="UER00468"/>
</dbReference>
<dbReference type="GO" id="GO:0005737">
    <property type="term" value="C:cytoplasm"/>
    <property type="evidence" value="ECO:0007669"/>
    <property type="project" value="UniProtKB-SubCell"/>
</dbReference>
<dbReference type="GO" id="GO:0004139">
    <property type="term" value="F:deoxyribose-phosphate aldolase activity"/>
    <property type="evidence" value="ECO:0007669"/>
    <property type="project" value="UniProtKB-UniRule"/>
</dbReference>
<dbReference type="GO" id="GO:0006018">
    <property type="term" value="P:2-deoxyribose 1-phosphate catabolic process"/>
    <property type="evidence" value="ECO:0007669"/>
    <property type="project" value="UniProtKB-UniRule"/>
</dbReference>
<dbReference type="GO" id="GO:0016052">
    <property type="term" value="P:carbohydrate catabolic process"/>
    <property type="evidence" value="ECO:0007669"/>
    <property type="project" value="TreeGrafter"/>
</dbReference>
<dbReference type="GO" id="GO:0009264">
    <property type="term" value="P:deoxyribonucleotide catabolic process"/>
    <property type="evidence" value="ECO:0007669"/>
    <property type="project" value="InterPro"/>
</dbReference>
<dbReference type="CDD" id="cd00959">
    <property type="entry name" value="DeoC"/>
    <property type="match status" value="1"/>
</dbReference>
<dbReference type="FunFam" id="3.20.20.70:FF:000034">
    <property type="entry name" value="Deoxyribose-phosphate aldolase"/>
    <property type="match status" value="1"/>
</dbReference>
<dbReference type="Gene3D" id="3.20.20.70">
    <property type="entry name" value="Aldolase class I"/>
    <property type="match status" value="1"/>
</dbReference>
<dbReference type="HAMAP" id="MF_00592">
    <property type="entry name" value="DeoC_type2"/>
    <property type="match status" value="1"/>
</dbReference>
<dbReference type="InterPro" id="IPR013785">
    <property type="entry name" value="Aldolase_TIM"/>
</dbReference>
<dbReference type="InterPro" id="IPR011343">
    <property type="entry name" value="DeoC"/>
</dbReference>
<dbReference type="InterPro" id="IPR002915">
    <property type="entry name" value="DeoC/FbaB/LacD_aldolase"/>
</dbReference>
<dbReference type="InterPro" id="IPR023649">
    <property type="entry name" value="DeoC_typeII"/>
</dbReference>
<dbReference type="NCBIfam" id="TIGR00126">
    <property type="entry name" value="deoC"/>
    <property type="match status" value="1"/>
</dbReference>
<dbReference type="PANTHER" id="PTHR10889">
    <property type="entry name" value="DEOXYRIBOSE-PHOSPHATE ALDOLASE"/>
    <property type="match status" value="1"/>
</dbReference>
<dbReference type="PANTHER" id="PTHR10889:SF3">
    <property type="entry name" value="DEOXYRIBOSE-PHOSPHATE ALDOLASE"/>
    <property type="match status" value="1"/>
</dbReference>
<dbReference type="Pfam" id="PF01791">
    <property type="entry name" value="DeoC"/>
    <property type="match status" value="1"/>
</dbReference>
<dbReference type="PIRSF" id="PIRSF001357">
    <property type="entry name" value="DeoC"/>
    <property type="match status" value="1"/>
</dbReference>
<dbReference type="SMART" id="SM01133">
    <property type="entry name" value="DeoC"/>
    <property type="match status" value="1"/>
</dbReference>
<dbReference type="SUPFAM" id="SSF51569">
    <property type="entry name" value="Aldolase"/>
    <property type="match status" value="1"/>
</dbReference>
<accession>B5Z4R3</accession>
<gene>
    <name evidence="1" type="primary">deoC</name>
    <name type="ordered locus">ECH74115_5896</name>
</gene>